<sequence length="226" mass="24356">MVKPPAGGNEGGRGKPARLKTAYGRTPSQQAWLERQINDPFSAKARALGYRSRAAFKISEIDDKFHFFSKGAKVIDLGCAPGGWLQIAVERGVTTLAGIDLLPVDPVAPAHLLEMDFTADGAPEKLLELLGGEPDLVMSDMAPNTVGHRETDHLRIVGLIEIAAEFAIDVLKPGGAFVAKAFQGGETAEIIGKLKRHFDKVQHFKPKASRQDSSEVFLVATGFKGR</sequence>
<dbReference type="EC" id="2.1.1.166" evidence="1"/>
<dbReference type="EMBL" id="AE005673">
    <property type="protein sequence ID" value="AAK23594.1"/>
    <property type="molecule type" value="Genomic_DNA"/>
</dbReference>
<dbReference type="PIR" id="F87449">
    <property type="entry name" value="F87449"/>
</dbReference>
<dbReference type="RefSeq" id="NP_420426.1">
    <property type="nucleotide sequence ID" value="NC_002696.2"/>
</dbReference>
<dbReference type="SMR" id="Q9A7V4"/>
<dbReference type="STRING" id="190650.CC_1615"/>
<dbReference type="EnsemblBacteria" id="AAK23594">
    <property type="protein sequence ID" value="AAK23594"/>
    <property type="gene ID" value="CC_1615"/>
</dbReference>
<dbReference type="KEGG" id="ccr:CC_1615"/>
<dbReference type="PATRIC" id="fig|190650.5.peg.1642"/>
<dbReference type="eggNOG" id="COG0293">
    <property type="taxonomic scope" value="Bacteria"/>
</dbReference>
<dbReference type="HOGENOM" id="CLU_009422_4_2_5"/>
<dbReference type="BioCyc" id="CAULO:CC1615-MONOMER"/>
<dbReference type="Proteomes" id="UP000001816">
    <property type="component" value="Chromosome"/>
</dbReference>
<dbReference type="GO" id="GO:0005737">
    <property type="term" value="C:cytoplasm"/>
    <property type="evidence" value="ECO:0007669"/>
    <property type="project" value="UniProtKB-SubCell"/>
</dbReference>
<dbReference type="GO" id="GO:0008650">
    <property type="term" value="F:rRNA (uridine-2'-O-)-methyltransferase activity"/>
    <property type="evidence" value="ECO:0007669"/>
    <property type="project" value="UniProtKB-UniRule"/>
</dbReference>
<dbReference type="Gene3D" id="3.40.50.150">
    <property type="entry name" value="Vaccinia Virus protein VP39"/>
    <property type="match status" value="1"/>
</dbReference>
<dbReference type="HAMAP" id="MF_01547">
    <property type="entry name" value="RNA_methyltr_E"/>
    <property type="match status" value="1"/>
</dbReference>
<dbReference type="InterPro" id="IPR050082">
    <property type="entry name" value="RNA_methyltr_RlmE"/>
</dbReference>
<dbReference type="InterPro" id="IPR002877">
    <property type="entry name" value="RNA_MeTrfase_FtsJ_dom"/>
</dbReference>
<dbReference type="InterPro" id="IPR015507">
    <property type="entry name" value="rRNA-MeTfrase_E"/>
</dbReference>
<dbReference type="InterPro" id="IPR029063">
    <property type="entry name" value="SAM-dependent_MTases_sf"/>
</dbReference>
<dbReference type="PANTHER" id="PTHR10920">
    <property type="entry name" value="RIBOSOMAL RNA METHYLTRANSFERASE"/>
    <property type="match status" value="1"/>
</dbReference>
<dbReference type="PANTHER" id="PTHR10920:SF18">
    <property type="entry name" value="RRNA METHYLTRANSFERASE 2, MITOCHONDRIAL"/>
    <property type="match status" value="1"/>
</dbReference>
<dbReference type="Pfam" id="PF01728">
    <property type="entry name" value="FtsJ"/>
    <property type="match status" value="1"/>
</dbReference>
<dbReference type="PIRSF" id="PIRSF005461">
    <property type="entry name" value="23S_rRNA_mtase"/>
    <property type="match status" value="1"/>
</dbReference>
<dbReference type="SUPFAM" id="SSF53335">
    <property type="entry name" value="S-adenosyl-L-methionine-dependent methyltransferases"/>
    <property type="match status" value="1"/>
</dbReference>
<comment type="function">
    <text evidence="1">Specifically methylates the uridine in position 2552 of 23S rRNA at the 2'-O position of the ribose in the fully assembled 50S ribosomal subunit.</text>
</comment>
<comment type="catalytic activity">
    <reaction evidence="1">
        <text>uridine(2552) in 23S rRNA + S-adenosyl-L-methionine = 2'-O-methyluridine(2552) in 23S rRNA + S-adenosyl-L-homocysteine + H(+)</text>
        <dbReference type="Rhea" id="RHEA:42720"/>
        <dbReference type="Rhea" id="RHEA-COMP:10202"/>
        <dbReference type="Rhea" id="RHEA-COMP:10203"/>
        <dbReference type="ChEBI" id="CHEBI:15378"/>
        <dbReference type="ChEBI" id="CHEBI:57856"/>
        <dbReference type="ChEBI" id="CHEBI:59789"/>
        <dbReference type="ChEBI" id="CHEBI:65315"/>
        <dbReference type="ChEBI" id="CHEBI:74478"/>
        <dbReference type="EC" id="2.1.1.166"/>
    </reaction>
</comment>
<comment type="subcellular location">
    <subcellularLocation>
        <location evidence="1">Cytoplasm</location>
    </subcellularLocation>
</comment>
<comment type="similarity">
    <text evidence="1">Belongs to the class I-like SAM-binding methyltransferase superfamily. RNA methyltransferase RlmE family.</text>
</comment>
<proteinExistence type="inferred from homology"/>
<feature type="chain" id="PRO_0000155486" description="Ribosomal RNA large subunit methyltransferase E">
    <location>
        <begin position="1"/>
        <end position="226"/>
    </location>
</feature>
<feature type="region of interest" description="Disordered" evidence="2">
    <location>
        <begin position="1"/>
        <end position="25"/>
    </location>
</feature>
<feature type="active site" description="Proton acceptor" evidence="1">
    <location>
        <position position="180"/>
    </location>
</feature>
<feature type="binding site" evidence="1">
    <location>
        <position position="82"/>
    </location>
    <ligand>
        <name>S-adenosyl-L-methionine</name>
        <dbReference type="ChEBI" id="CHEBI:59789"/>
    </ligand>
</feature>
<feature type="binding site" evidence="1">
    <location>
        <position position="84"/>
    </location>
    <ligand>
        <name>S-adenosyl-L-methionine</name>
        <dbReference type="ChEBI" id="CHEBI:59789"/>
    </ligand>
</feature>
<feature type="binding site" evidence="1">
    <location>
        <position position="100"/>
    </location>
    <ligand>
        <name>S-adenosyl-L-methionine</name>
        <dbReference type="ChEBI" id="CHEBI:59789"/>
    </ligand>
</feature>
<feature type="binding site" evidence="1">
    <location>
        <position position="116"/>
    </location>
    <ligand>
        <name>S-adenosyl-L-methionine</name>
        <dbReference type="ChEBI" id="CHEBI:59789"/>
    </ligand>
</feature>
<feature type="binding site" evidence="1">
    <location>
        <position position="140"/>
    </location>
    <ligand>
        <name>S-adenosyl-L-methionine</name>
        <dbReference type="ChEBI" id="CHEBI:59789"/>
    </ligand>
</feature>
<accession>Q9A7V4</accession>
<name>RLME_CAUVC</name>
<organism>
    <name type="scientific">Caulobacter vibrioides (strain ATCC 19089 / CIP 103742 / CB 15)</name>
    <name type="common">Caulobacter crescentus</name>
    <dbReference type="NCBI Taxonomy" id="190650"/>
    <lineage>
        <taxon>Bacteria</taxon>
        <taxon>Pseudomonadati</taxon>
        <taxon>Pseudomonadota</taxon>
        <taxon>Alphaproteobacteria</taxon>
        <taxon>Caulobacterales</taxon>
        <taxon>Caulobacteraceae</taxon>
        <taxon>Caulobacter</taxon>
    </lineage>
</organism>
<evidence type="ECO:0000255" key="1">
    <source>
        <dbReference type="HAMAP-Rule" id="MF_01547"/>
    </source>
</evidence>
<evidence type="ECO:0000256" key="2">
    <source>
        <dbReference type="SAM" id="MobiDB-lite"/>
    </source>
</evidence>
<gene>
    <name evidence="1" type="primary">rlmE</name>
    <name evidence="1" type="synonym">ftsJ</name>
    <name evidence="1" type="synonym">rrmJ</name>
    <name type="ordered locus">CC_1615</name>
</gene>
<keyword id="KW-0963">Cytoplasm</keyword>
<keyword id="KW-0489">Methyltransferase</keyword>
<keyword id="KW-1185">Reference proteome</keyword>
<keyword id="KW-0698">rRNA processing</keyword>
<keyword id="KW-0949">S-adenosyl-L-methionine</keyword>
<keyword id="KW-0808">Transferase</keyword>
<protein>
    <recommendedName>
        <fullName evidence="1">Ribosomal RNA large subunit methyltransferase E</fullName>
        <ecNumber evidence="1">2.1.1.166</ecNumber>
    </recommendedName>
    <alternativeName>
        <fullName evidence="1">23S rRNA Um2552 methyltransferase</fullName>
    </alternativeName>
    <alternativeName>
        <fullName evidence="1">rRNA (uridine-2'-O-)-methyltransferase</fullName>
    </alternativeName>
</protein>
<reference key="1">
    <citation type="journal article" date="2001" name="Proc. Natl. Acad. Sci. U.S.A.">
        <title>Complete genome sequence of Caulobacter crescentus.</title>
        <authorList>
            <person name="Nierman W.C."/>
            <person name="Feldblyum T.V."/>
            <person name="Laub M.T."/>
            <person name="Paulsen I.T."/>
            <person name="Nelson K.E."/>
            <person name="Eisen J.A."/>
            <person name="Heidelberg J.F."/>
            <person name="Alley M.R.K."/>
            <person name="Ohta N."/>
            <person name="Maddock J.R."/>
            <person name="Potocka I."/>
            <person name="Nelson W.C."/>
            <person name="Newton A."/>
            <person name="Stephens C."/>
            <person name="Phadke N.D."/>
            <person name="Ely B."/>
            <person name="DeBoy R.T."/>
            <person name="Dodson R.J."/>
            <person name="Durkin A.S."/>
            <person name="Gwinn M.L."/>
            <person name="Haft D.H."/>
            <person name="Kolonay J.F."/>
            <person name="Smit J."/>
            <person name="Craven M.B."/>
            <person name="Khouri H.M."/>
            <person name="Shetty J."/>
            <person name="Berry K.J."/>
            <person name="Utterback T.R."/>
            <person name="Tran K."/>
            <person name="Wolf A.M."/>
            <person name="Vamathevan J.J."/>
            <person name="Ermolaeva M.D."/>
            <person name="White O."/>
            <person name="Salzberg S.L."/>
            <person name="Venter J.C."/>
            <person name="Shapiro L."/>
            <person name="Fraser C.M."/>
        </authorList>
    </citation>
    <scope>NUCLEOTIDE SEQUENCE [LARGE SCALE GENOMIC DNA]</scope>
    <source>
        <strain>ATCC 19089 / CIP 103742 / CB 15</strain>
    </source>
</reference>